<keyword id="KW-0067">ATP-binding</keyword>
<keyword id="KW-0436">Ligase</keyword>
<keyword id="KW-0547">Nucleotide-binding</keyword>
<keyword id="KW-0648">Protein biosynthesis</keyword>
<gene>
    <name evidence="1" type="primary">gatA</name>
    <name type="ordered locus">Bsph_0229</name>
</gene>
<reference key="1">
    <citation type="journal article" date="2008" name="J. Bacteriol.">
        <title>Complete genome sequence of the mosquitocidal bacterium Bacillus sphaericus C3-41 and comparison with those of closely related Bacillus species.</title>
        <authorList>
            <person name="Hu X."/>
            <person name="Fan W."/>
            <person name="Han B."/>
            <person name="Liu H."/>
            <person name="Zheng D."/>
            <person name="Li Q."/>
            <person name="Dong W."/>
            <person name="Yan J."/>
            <person name="Gao M."/>
            <person name="Berry C."/>
            <person name="Yuan Z."/>
        </authorList>
    </citation>
    <scope>NUCLEOTIDE SEQUENCE [LARGE SCALE GENOMIC DNA]</scope>
    <source>
        <strain>C3-41</strain>
    </source>
</reference>
<protein>
    <recommendedName>
        <fullName evidence="1">Glutamyl-tRNA(Gln) amidotransferase subunit A</fullName>
        <shortName evidence="1">Glu-ADT subunit A</shortName>
        <ecNumber evidence="1">6.3.5.7</ecNumber>
    </recommendedName>
</protein>
<organism>
    <name type="scientific">Lysinibacillus sphaericus (strain C3-41)</name>
    <dbReference type="NCBI Taxonomy" id="444177"/>
    <lineage>
        <taxon>Bacteria</taxon>
        <taxon>Bacillati</taxon>
        <taxon>Bacillota</taxon>
        <taxon>Bacilli</taxon>
        <taxon>Bacillales</taxon>
        <taxon>Bacillaceae</taxon>
        <taxon>Lysinibacillus</taxon>
    </lineage>
</organism>
<sequence>MTLFERSAKELQAEIKAGNLSIADLTKEAYERIAKLDGDVQAFLASNEEKATAQAAEMDKVPFEERGPLFGLPIGVKDNIVTEGLETTCASKILEGFMPIYDATVVNKLREAGMITVGKLNMDEFAMGSSNENSYYKTTKNPWNLNHVPGGSSGASAASVAAGEVPFSLGSDTGGSIRQPAAYCGVVGMKPTYGRVSRFGLVAFASSLDQIGPITRNVEDNALLLEAIAGLDPNDSTSADVEVPNYAAALTGDVKGLRIAVPKEFLGEGVGEAARQSVLAALEVLKGLGATVEEVSLPHSKYALAAYYILSSSEASSNLSRFDGIRYGFRAENVTNLMDLYKETRAQGFGDEVKRRIMLGTYSLSAGTYDAYYKKAQQARTLIKADYDKVFEDFDVIIGPTSPTPAFKIGENVDDPMTMYANDILTIPMNLAGVPAISIPCGFDNGLPLGLQIIGKYFDEATIYRVAHAFEQATEFHKQVPQMWEGK</sequence>
<proteinExistence type="inferred from homology"/>
<evidence type="ECO:0000255" key="1">
    <source>
        <dbReference type="HAMAP-Rule" id="MF_00120"/>
    </source>
</evidence>
<comment type="function">
    <text evidence="1">Allows the formation of correctly charged Gln-tRNA(Gln) through the transamidation of misacylated Glu-tRNA(Gln) in organisms which lack glutaminyl-tRNA synthetase. The reaction takes place in the presence of glutamine and ATP through an activated gamma-phospho-Glu-tRNA(Gln).</text>
</comment>
<comment type="catalytic activity">
    <reaction evidence="1">
        <text>L-glutamyl-tRNA(Gln) + L-glutamine + ATP + H2O = L-glutaminyl-tRNA(Gln) + L-glutamate + ADP + phosphate + H(+)</text>
        <dbReference type="Rhea" id="RHEA:17521"/>
        <dbReference type="Rhea" id="RHEA-COMP:9681"/>
        <dbReference type="Rhea" id="RHEA-COMP:9684"/>
        <dbReference type="ChEBI" id="CHEBI:15377"/>
        <dbReference type="ChEBI" id="CHEBI:15378"/>
        <dbReference type="ChEBI" id="CHEBI:29985"/>
        <dbReference type="ChEBI" id="CHEBI:30616"/>
        <dbReference type="ChEBI" id="CHEBI:43474"/>
        <dbReference type="ChEBI" id="CHEBI:58359"/>
        <dbReference type="ChEBI" id="CHEBI:78520"/>
        <dbReference type="ChEBI" id="CHEBI:78521"/>
        <dbReference type="ChEBI" id="CHEBI:456216"/>
        <dbReference type="EC" id="6.3.5.7"/>
    </reaction>
</comment>
<comment type="subunit">
    <text evidence="1">Heterotrimer of A, B and C subunits.</text>
</comment>
<comment type="similarity">
    <text evidence="1">Belongs to the amidase family. GatA subfamily.</text>
</comment>
<accession>B1HTW9</accession>
<dbReference type="EC" id="6.3.5.7" evidence="1"/>
<dbReference type="EMBL" id="CP000817">
    <property type="protein sequence ID" value="ACA37860.1"/>
    <property type="molecule type" value="Genomic_DNA"/>
</dbReference>
<dbReference type="RefSeq" id="WP_012292028.1">
    <property type="nucleotide sequence ID" value="NC_010382.1"/>
</dbReference>
<dbReference type="SMR" id="B1HTW9"/>
<dbReference type="EnsemblBacteria" id="ACA37860">
    <property type="protein sequence ID" value="ACA37860"/>
    <property type="gene ID" value="Bsph_0229"/>
</dbReference>
<dbReference type="KEGG" id="lsp:Bsph_0229"/>
<dbReference type="HOGENOM" id="CLU_009600_0_3_9"/>
<dbReference type="Proteomes" id="UP000002164">
    <property type="component" value="Chromosome"/>
</dbReference>
<dbReference type="GO" id="GO:0030956">
    <property type="term" value="C:glutamyl-tRNA(Gln) amidotransferase complex"/>
    <property type="evidence" value="ECO:0007669"/>
    <property type="project" value="InterPro"/>
</dbReference>
<dbReference type="GO" id="GO:0005524">
    <property type="term" value="F:ATP binding"/>
    <property type="evidence" value="ECO:0007669"/>
    <property type="project" value="UniProtKB-KW"/>
</dbReference>
<dbReference type="GO" id="GO:0050567">
    <property type="term" value="F:glutaminyl-tRNA synthase (glutamine-hydrolyzing) activity"/>
    <property type="evidence" value="ECO:0007669"/>
    <property type="project" value="UniProtKB-UniRule"/>
</dbReference>
<dbReference type="GO" id="GO:0006412">
    <property type="term" value="P:translation"/>
    <property type="evidence" value="ECO:0007669"/>
    <property type="project" value="UniProtKB-UniRule"/>
</dbReference>
<dbReference type="Gene3D" id="3.90.1300.10">
    <property type="entry name" value="Amidase signature (AS) domain"/>
    <property type="match status" value="1"/>
</dbReference>
<dbReference type="HAMAP" id="MF_00120">
    <property type="entry name" value="GatA"/>
    <property type="match status" value="1"/>
</dbReference>
<dbReference type="InterPro" id="IPR000120">
    <property type="entry name" value="Amidase"/>
</dbReference>
<dbReference type="InterPro" id="IPR023631">
    <property type="entry name" value="Amidase_dom"/>
</dbReference>
<dbReference type="InterPro" id="IPR036928">
    <property type="entry name" value="AS_sf"/>
</dbReference>
<dbReference type="InterPro" id="IPR004412">
    <property type="entry name" value="GatA"/>
</dbReference>
<dbReference type="NCBIfam" id="TIGR00132">
    <property type="entry name" value="gatA"/>
    <property type="match status" value="1"/>
</dbReference>
<dbReference type="PANTHER" id="PTHR11895:SF151">
    <property type="entry name" value="GLUTAMYL-TRNA(GLN) AMIDOTRANSFERASE SUBUNIT A"/>
    <property type="match status" value="1"/>
</dbReference>
<dbReference type="PANTHER" id="PTHR11895">
    <property type="entry name" value="TRANSAMIDASE"/>
    <property type="match status" value="1"/>
</dbReference>
<dbReference type="Pfam" id="PF01425">
    <property type="entry name" value="Amidase"/>
    <property type="match status" value="1"/>
</dbReference>
<dbReference type="SUPFAM" id="SSF75304">
    <property type="entry name" value="Amidase signature (AS) enzymes"/>
    <property type="match status" value="1"/>
</dbReference>
<feature type="chain" id="PRO_1000095146" description="Glutamyl-tRNA(Gln) amidotransferase subunit A">
    <location>
        <begin position="1"/>
        <end position="487"/>
    </location>
</feature>
<feature type="active site" description="Charge relay system" evidence="1">
    <location>
        <position position="77"/>
    </location>
</feature>
<feature type="active site" description="Charge relay system" evidence="1">
    <location>
        <position position="152"/>
    </location>
</feature>
<feature type="active site" description="Acyl-ester intermediate" evidence="1">
    <location>
        <position position="176"/>
    </location>
</feature>
<name>GATA_LYSSC</name>